<dbReference type="EMBL" id="CP000559">
    <property type="protein sequence ID" value="ABN06632.1"/>
    <property type="molecule type" value="Genomic_DNA"/>
</dbReference>
<dbReference type="RefSeq" id="WP_011832833.1">
    <property type="nucleotide sequence ID" value="NC_008942.1"/>
</dbReference>
<dbReference type="SMR" id="A2SQM6"/>
<dbReference type="STRING" id="410358.Mlab_0458"/>
<dbReference type="GeneID" id="4794695"/>
<dbReference type="KEGG" id="mla:Mlab_0458"/>
<dbReference type="eggNOG" id="arCOG04270">
    <property type="taxonomic scope" value="Archaea"/>
</dbReference>
<dbReference type="HOGENOM" id="CLU_100097_0_0_2"/>
<dbReference type="OrthoDB" id="5935at2157"/>
<dbReference type="Proteomes" id="UP000000365">
    <property type="component" value="Chromosome"/>
</dbReference>
<dbReference type="GO" id="GO:0003677">
    <property type="term" value="F:DNA binding"/>
    <property type="evidence" value="ECO:0007669"/>
    <property type="project" value="UniProtKB-KW"/>
</dbReference>
<dbReference type="GO" id="GO:0006355">
    <property type="term" value="P:regulation of DNA-templated transcription"/>
    <property type="evidence" value="ECO:0007669"/>
    <property type="project" value="InterPro"/>
</dbReference>
<dbReference type="GO" id="GO:0006367">
    <property type="term" value="P:transcription initiation at RNA polymerase II promoter"/>
    <property type="evidence" value="ECO:0007669"/>
    <property type="project" value="InterPro"/>
</dbReference>
<dbReference type="Gene3D" id="1.10.10.10">
    <property type="entry name" value="Winged helix-like DNA-binding domain superfamily/Winged helix DNA-binding domain"/>
    <property type="match status" value="1"/>
</dbReference>
<dbReference type="HAMAP" id="MF_01909">
    <property type="entry name" value="TFE_arch"/>
    <property type="match status" value="1"/>
</dbReference>
<dbReference type="InterPro" id="IPR016481">
    <property type="entry name" value="TF_E_archaea"/>
</dbReference>
<dbReference type="InterPro" id="IPR039997">
    <property type="entry name" value="TFE"/>
</dbReference>
<dbReference type="InterPro" id="IPR017919">
    <property type="entry name" value="TFIIE/TFIIEa_HTH"/>
</dbReference>
<dbReference type="InterPro" id="IPR002853">
    <property type="entry name" value="TFIIE_asu"/>
</dbReference>
<dbReference type="InterPro" id="IPR024550">
    <property type="entry name" value="TFIIEa/SarR/Rpc3_HTH_dom"/>
</dbReference>
<dbReference type="InterPro" id="IPR036388">
    <property type="entry name" value="WH-like_DNA-bd_sf"/>
</dbReference>
<dbReference type="InterPro" id="IPR036390">
    <property type="entry name" value="WH_DNA-bd_sf"/>
</dbReference>
<dbReference type="InterPro" id="IPR013137">
    <property type="entry name" value="Znf_TFIIB"/>
</dbReference>
<dbReference type="PANTHER" id="PTHR13097:SF7">
    <property type="entry name" value="GENERAL TRANSCRIPTION FACTOR IIE SUBUNIT 1"/>
    <property type="match status" value="1"/>
</dbReference>
<dbReference type="PANTHER" id="PTHR13097">
    <property type="entry name" value="TRANSCRIPTION INITIATION FACTOR IIE, ALPHA SUBUNIT"/>
    <property type="match status" value="1"/>
</dbReference>
<dbReference type="Pfam" id="PF02002">
    <property type="entry name" value="TFIIE_alpha"/>
    <property type="match status" value="1"/>
</dbReference>
<dbReference type="Pfam" id="PF08271">
    <property type="entry name" value="Zn_Ribbon_TF"/>
    <property type="match status" value="1"/>
</dbReference>
<dbReference type="PIRSF" id="PIRSF006373">
    <property type="entry name" value="TF_E_archaea"/>
    <property type="match status" value="1"/>
</dbReference>
<dbReference type="SMART" id="SM00531">
    <property type="entry name" value="TFIIE"/>
    <property type="match status" value="1"/>
</dbReference>
<dbReference type="SUPFAM" id="SSF46785">
    <property type="entry name" value="Winged helix' DNA-binding domain"/>
    <property type="match status" value="1"/>
</dbReference>
<dbReference type="PROSITE" id="PS51344">
    <property type="entry name" value="HTH_TFE_IIE"/>
    <property type="match status" value="1"/>
</dbReference>
<feature type="chain" id="PRO_0000326603" description="Transcription factor E">
    <location>
        <begin position="1"/>
        <end position="211"/>
    </location>
</feature>
<feature type="domain" description="HTH TFE/IIEalpha-type" evidence="1">
    <location>
        <begin position="10"/>
        <end position="130"/>
    </location>
</feature>
<comment type="function">
    <text evidence="1">Transcription factor that plays a role in the activation of archaeal genes transcribed by RNA polymerase. Facilitates transcription initiation by enhancing TATA-box recognition by TATA-box-binding protein (Tbp), and transcription factor B (Tfb) and RNA polymerase recruitment. Not absolutely required for transcription in vitro, but particularly important in cases where Tbp or Tfb function is not optimal. It dynamically alters the nucleic acid-binding properties of RNA polymerases by stabilizing the initiation complex and destabilizing elongation complexes. Seems to translocate with the RNA polymerase following initiation and acts by binding to the non template strand of the transcription bubble in elongation complexes.</text>
</comment>
<comment type="subunit">
    <text evidence="1">Monomer. Interaction with RNA polymerase subunits RpoF and RpoE is necessary for Tfe stimulatory transcription activity. Able to interact with Tbp and RNA polymerase in the absence of DNA promoter. Interacts both with the preinitiation and elongation complexes.</text>
</comment>
<comment type="domain">
    <text evidence="1">The winged helix domain is involved in binding to DNA in the preinitiation complex.</text>
</comment>
<comment type="similarity">
    <text evidence="1">Belongs to the TFE family.</text>
</comment>
<gene>
    <name evidence="1" type="primary">tfe</name>
    <name type="ordered locus">Mlab_0458</name>
</gene>
<evidence type="ECO:0000255" key="1">
    <source>
        <dbReference type="HAMAP-Rule" id="MF_01909"/>
    </source>
</evidence>
<organism>
    <name type="scientific">Methanocorpusculum labreanum (strain ATCC 43576 / DSM 4855 / Z)</name>
    <dbReference type="NCBI Taxonomy" id="410358"/>
    <lineage>
        <taxon>Archaea</taxon>
        <taxon>Methanobacteriati</taxon>
        <taxon>Methanobacteriota</taxon>
        <taxon>Stenosarchaea group</taxon>
        <taxon>Methanomicrobia</taxon>
        <taxon>Methanomicrobiales</taxon>
        <taxon>Methanocorpusculaceae</taxon>
        <taxon>Methanocorpusculum</taxon>
    </lineage>
</organism>
<keyword id="KW-0238">DNA-binding</keyword>
<keyword id="KW-1185">Reference proteome</keyword>
<keyword id="KW-0804">Transcription</keyword>
<keyword id="KW-0805">Transcription regulation</keyword>
<name>TFE_METLZ</name>
<sequence>MTVITEEQLGNPAIYQYLLKLVGEEGLELLRRWSDVSYARRWVEEKLSSEDLKAADKARFLAESRRSDEDLVEAERSDEEIAELTGINLNSVRHTLYNLYEHRLAEYRRIKNNETGWLTYLWLMRMDHMNMVLRNEMEVAAGKLAGRLRYDEANDFYQCKNCGITTTFNNAMTTNFSCPQCGTMLVHFDDELIITALKKRLAKMQTALDNA</sequence>
<reference key="1">
    <citation type="journal article" date="2009" name="Stand. Genomic Sci.">
        <title>Complete genome sequence of Methanocorpusculum labreanum type strain Z.</title>
        <authorList>
            <person name="Anderson I.J."/>
            <person name="Sieprawska-Lupa M."/>
            <person name="Goltsman E."/>
            <person name="Lapidus A."/>
            <person name="Copeland A."/>
            <person name="Glavina Del Rio T."/>
            <person name="Tice H."/>
            <person name="Dalin E."/>
            <person name="Barry K."/>
            <person name="Pitluck S."/>
            <person name="Hauser L."/>
            <person name="Land M."/>
            <person name="Lucas S."/>
            <person name="Richardson P."/>
            <person name="Whitman W.B."/>
            <person name="Kyrpides N.C."/>
        </authorList>
    </citation>
    <scope>NUCLEOTIDE SEQUENCE [LARGE SCALE GENOMIC DNA]</scope>
    <source>
        <strain>ATCC 43576 / DSM 4855 / Z</strain>
    </source>
</reference>
<proteinExistence type="inferred from homology"/>
<accession>A2SQM6</accession>
<protein>
    <recommendedName>
        <fullName evidence="1">Transcription factor E</fullName>
        <shortName evidence="1">TFE</shortName>
    </recommendedName>
    <alternativeName>
        <fullName evidence="1">TFIIE subunit alpha homolog</fullName>
    </alternativeName>
    <alternativeName>
        <fullName evidence="1">Transcription initiation factor TFIIE</fullName>
    </alternativeName>
</protein>